<gene>
    <name type="ORF">IIV6-010R</name>
</gene>
<organism>
    <name type="scientific">Invertebrate iridescent virus 6</name>
    <name type="common">IIV-6</name>
    <name type="synonym">Chilo iridescent virus</name>
    <dbReference type="NCBI Taxonomy" id="176652"/>
    <lineage>
        <taxon>Viruses</taxon>
        <taxon>Varidnaviria</taxon>
        <taxon>Bamfordvirae</taxon>
        <taxon>Nucleocytoviricota</taxon>
        <taxon>Megaviricetes</taxon>
        <taxon>Pimascovirales</taxon>
        <taxon>Iridoviridae</taxon>
        <taxon>Betairidovirinae</taxon>
        <taxon>Iridovirus</taxon>
    </lineage>
</organism>
<sequence length="120" mass="12845">MNNFNYFNGKMVEDILENPDEDILNPDKSKTKDIVIKEDFCGACLALPLAFAGAGTATATSGDTSGNKSKSSIFFWSVVISIIGLIATVWFLSGDCTTCVSEGNSRGKRTGSMVCSSTRR</sequence>
<protein>
    <recommendedName>
        <fullName>Transmembrane protein 010R</fullName>
    </recommendedName>
</protein>
<reference key="1">
    <citation type="journal article" date="2001" name="Virology">
        <title>Analysis of the first complete DNA sequence of an invertebrate iridovirus: coding strategy of the genome of Chilo iridescent virus.</title>
        <authorList>
            <person name="Jakob N.J."/>
            <person name="Mueller K."/>
            <person name="Bahr U."/>
            <person name="Darai G."/>
        </authorList>
    </citation>
    <scope>NUCLEOTIDE SEQUENCE [LARGE SCALE GENOMIC DNA]</scope>
</reference>
<reference key="2">
    <citation type="journal article" date="2007" name="Virol. J.">
        <title>Comparative genomic analysis of the family Iridoviridae: re-annotating and defining the core set of iridovirus genes.</title>
        <authorList>
            <person name="Eaton H.E."/>
            <person name="Metcalf J."/>
            <person name="Penny E."/>
            <person name="Tcherepanov V."/>
            <person name="Upton C."/>
            <person name="Brunetti C.R."/>
        </authorList>
    </citation>
    <scope>GENOME REANNOTATION</scope>
</reference>
<accession>Q91G84</accession>
<keyword id="KW-0472">Membrane</keyword>
<keyword id="KW-1185">Reference proteome</keyword>
<keyword id="KW-0812">Transmembrane</keyword>
<keyword id="KW-1133">Transmembrane helix</keyword>
<feature type="chain" id="PRO_0000377960" description="Transmembrane protein 010R">
    <location>
        <begin position="1"/>
        <end position="120"/>
    </location>
</feature>
<feature type="transmembrane region" description="Helical" evidence="1">
    <location>
        <begin position="40"/>
        <end position="60"/>
    </location>
</feature>
<feature type="transmembrane region" description="Helical" evidence="1">
    <location>
        <begin position="72"/>
        <end position="92"/>
    </location>
</feature>
<name>VF010_IIV6</name>
<dbReference type="EMBL" id="AF303741">
    <property type="protein sequence ID" value="AAK81948.1"/>
    <property type="molecule type" value="Genomic_DNA"/>
</dbReference>
<dbReference type="RefSeq" id="NP_149473.1">
    <property type="nucleotide sequence ID" value="NC_003038.1"/>
</dbReference>
<dbReference type="SMR" id="Q91G84"/>
<dbReference type="KEGG" id="vg:1733132"/>
<dbReference type="Proteomes" id="UP000001359">
    <property type="component" value="Genome"/>
</dbReference>
<dbReference type="GO" id="GO:0016020">
    <property type="term" value="C:membrane"/>
    <property type="evidence" value="ECO:0007669"/>
    <property type="project" value="UniProtKB-SubCell"/>
</dbReference>
<evidence type="ECO:0000255" key="1"/>
<evidence type="ECO:0000305" key="2"/>
<organismHost>
    <name type="scientific">Acheta domesticus</name>
    <name type="common">House cricket</name>
    <dbReference type="NCBI Taxonomy" id="6997"/>
</organismHost>
<organismHost>
    <name type="scientific">Chilo suppressalis</name>
    <name type="common">Asiatic rice borer moth</name>
    <dbReference type="NCBI Taxonomy" id="168631"/>
</organismHost>
<organismHost>
    <name type="scientific">Gryllus bimaculatus</name>
    <name type="common">Two-spotted cricket</name>
    <dbReference type="NCBI Taxonomy" id="6999"/>
</organismHost>
<organismHost>
    <name type="scientific">Gryllus campestris</name>
    <dbReference type="NCBI Taxonomy" id="58607"/>
</organismHost>
<organismHost>
    <name type="scientific">Spodoptera frugiperda</name>
    <name type="common">Fall armyworm</name>
    <dbReference type="NCBI Taxonomy" id="7108"/>
</organismHost>
<proteinExistence type="inferred from homology"/>
<comment type="subcellular location">
    <subcellularLocation>
        <location evidence="2">Membrane</location>
        <topology evidence="2">Multi-pass membrane protein</topology>
    </subcellularLocation>
</comment>
<comment type="similarity">
    <text evidence="2">Belongs to the IIV-6 010R family.</text>
</comment>